<evidence type="ECO:0000255" key="1">
    <source>
        <dbReference type="HAMAP-Rule" id="MF_00903"/>
    </source>
</evidence>
<evidence type="ECO:0000256" key="2">
    <source>
        <dbReference type="SAM" id="MobiDB-lite"/>
    </source>
</evidence>
<organism>
    <name type="scientific">Pantoea vagans (strain C9-1)</name>
    <name type="common">Pantoea agglomerans (strain C9-1)</name>
    <dbReference type="NCBI Taxonomy" id="712898"/>
    <lineage>
        <taxon>Bacteria</taxon>
        <taxon>Pseudomonadati</taxon>
        <taxon>Pseudomonadota</taxon>
        <taxon>Gammaproteobacteria</taxon>
        <taxon>Enterobacterales</taxon>
        <taxon>Erwiniaceae</taxon>
        <taxon>Pantoea</taxon>
    </lineage>
</organism>
<protein>
    <recommendedName>
        <fullName evidence="1">Probable Sec-independent protein translocase protein TatE</fullName>
    </recommendedName>
</protein>
<keyword id="KW-0997">Cell inner membrane</keyword>
<keyword id="KW-1003">Cell membrane</keyword>
<keyword id="KW-0472">Membrane</keyword>
<keyword id="KW-0653">Protein transport</keyword>
<keyword id="KW-0811">Translocation</keyword>
<keyword id="KW-0812">Transmembrane</keyword>
<keyword id="KW-1133">Transmembrane helix</keyword>
<keyword id="KW-0813">Transport</keyword>
<gene>
    <name evidence="1" type="primary">tatE</name>
    <name type="ordered locus">Pvag_0483</name>
</gene>
<comment type="function">
    <text evidence="1">Part of the twin-arginine translocation (Tat) system that transports large folded proteins containing a characteristic twin-arginine motif in their signal peptide across membranes. TatE shares overlapping functions with TatA.</text>
</comment>
<comment type="subcellular location">
    <subcellularLocation>
        <location evidence="1">Cell inner membrane</location>
        <topology evidence="1">Single-pass membrane protein</topology>
    </subcellularLocation>
</comment>
<comment type="similarity">
    <text evidence="1">Belongs to the TatA/E family. TatE subfamily.</text>
</comment>
<sequence>MEGISIAKLLIIGALIVLLFGTNKLRSLGGDLGSAIKGFKKAMKDEDTSATRTTAEDVPAERVVHKD</sequence>
<dbReference type="EMBL" id="CP002206">
    <property type="protein sequence ID" value="ADO08695.1"/>
    <property type="molecule type" value="Genomic_DNA"/>
</dbReference>
<dbReference type="RefSeq" id="WP_003854033.1">
    <property type="nucleotide sequence ID" value="NC_014562.1"/>
</dbReference>
<dbReference type="SMR" id="E1SFR4"/>
<dbReference type="GeneID" id="90522002"/>
<dbReference type="KEGG" id="pva:Pvag_0483"/>
<dbReference type="eggNOG" id="COG1826">
    <property type="taxonomic scope" value="Bacteria"/>
</dbReference>
<dbReference type="HOGENOM" id="CLU_086034_5_3_6"/>
<dbReference type="OrthoDB" id="7066617at2"/>
<dbReference type="GO" id="GO:0033281">
    <property type="term" value="C:TAT protein transport complex"/>
    <property type="evidence" value="ECO:0007669"/>
    <property type="project" value="UniProtKB-UniRule"/>
</dbReference>
<dbReference type="GO" id="GO:0008320">
    <property type="term" value="F:protein transmembrane transporter activity"/>
    <property type="evidence" value="ECO:0007669"/>
    <property type="project" value="UniProtKB-UniRule"/>
</dbReference>
<dbReference type="GO" id="GO:0043953">
    <property type="term" value="P:protein transport by the Tat complex"/>
    <property type="evidence" value="ECO:0007669"/>
    <property type="project" value="UniProtKB-UniRule"/>
</dbReference>
<dbReference type="Gene3D" id="1.20.5.3310">
    <property type="match status" value="1"/>
</dbReference>
<dbReference type="HAMAP" id="MF_00236">
    <property type="entry name" value="TatA_E"/>
    <property type="match status" value="1"/>
</dbReference>
<dbReference type="HAMAP" id="MF_00903">
    <property type="entry name" value="TatE"/>
    <property type="match status" value="1"/>
</dbReference>
<dbReference type="InterPro" id="IPR003369">
    <property type="entry name" value="TatA/B/E"/>
</dbReference>
<dbReference type="InterPro" id="IPR006312">
    <property type="entry name" value="TatA/E"/>
</dbReference>
<dbReference type="InterPro" id="IPR024905">
    <property type="entry name" value="TatE"/>
</dbReference>
<dbReference type="NCBIfam" id="NF002448">
    <property type="entry name" value="PRK01614.1"/>
    <property type="match status" value="1"/>
</dbReference>
<dbReference type="NCBIfam" id="NF002960">
    <property type="entry name" value="PRK03625.1"/>
    <property type="match status" value="1"/>
</dbReference>
<dbReference type="NCBIfam" id="TIGR01411">
    <property type="entry name" value="tatAE"/>
    <property type="match status" value="1"/>
</dbReference>
<dbReference type="PANTHER" id="PTHR42982">
    <property type="entry name" value="SEC-INDEPENDENT PROTEIN TRANSLOCASE PROTEIN TATA"/>
    <property type="match status" value="1"/>
</dbReference>
<dbReference type="PANTHER" id="PTHR42982:SF5">
    <property type="entry name" value="SEC-INDEPENDENT PROTEIN TRANSLOCASE PROTEIN TATE"/>
    <property type="match status" value="1"/>
</dbReference>
<dbReference type="Pfam" id="PF02416">
    <property type="entry name" value="TatA_B_E"/>
    <property type="match status" value="1"/>
</dbReference>
<proteinExistence type="inferred from homology"/>
<name>TATE_PANVC</name>
<accession>E1SFR4</accession>
<reference key="1">
    <citation type="journal article" date="2010" name="J. Bacteriol.">
        <title>The genome sequence of the biocontrol agent Pantoea vagans strain C9-1.</title>
        <authorList>
            <person name="Smits T.H."/>
            <person name="Rezzonico F."/>
            <person name="Kamber T."/>
            <person name="Goesmann A."/>
            <person name="Ishimaru C.A."/>
            <person name="Stockwell V.O."/>
            <person name="Frey J.E."/>
            <person name="Duffy B."/>
        </authorList>
    </citation>
    <scope>NUCLEOTIDE SEQUENCE [LARGE SCALE GENOMIC DNA]</scope>
    <source>
        <strain>C9-1</strain>
    </source>
</reference>
<feature type="chain" id="PRO_0000412971" description="Probable Sec-independent protein translocase protein TatE">
    <location>
        <begin position="1"/>
        <end position="67"/>
    </location>
</feature>
<feature type="transmembrane region" description="Helical" evidence="1">
    <location>
        <begin position="1"/>
        <end position="21"/>
    </location>
</feature>
<feature type="region of interest" description="Disordered" evidence="2">
    <location>
        <begin position="46"/>
        <end position="67"/>
    </location>
</feature>